<sequence length="100" mass="11152">MHFTQREQDKLMIVVAAEVARRRKARGLKLNHPEALALISDELLEGARDGKTVAELMSYGKTILNEEDVMDGVANMITELEIEATFPDGTKLITVHHPIV</sequence>
<protein>
    <recommendedName>
        <fullName evidence="1">Urease subunit gamma</fullName>
        <ecNumber evidence="1">3.5.1.5</ecNumber>
    </recommendedName>
    <alternativeName>
        <fullName evidence="1">Urea amidohydrolase subunit gamma</fullName>
    </alternativeName>
</protein>
<proteinExistence type="inferred from homology"/>
<feature type="chain" id="PRO_0000098045" description="Urease subunit gamma">
    <location>
        <begin position="1"/>
        <end position="100"/>
    </location>
</feature>
<accession>Q5HLW3</accession>
<reference key="1">
    <citation type="journal article" date="2005" name="J. Bacteriol.">
        <title>Insights on evolution of virulence and resistance from the complete genome analysis of an early methicillin-resistant Staphylococcus aureus strain and a biofilm-producing methicillin-resistant Staphylococcus epidermidis strain.</title>
        <authorList>
            <person name="Gill S.R."/>
            <person name="Fouts D.E."/>
            <person name="Archer G.L."/>
            <person name="Mongodin E.F."/>
            <person name="DeBoy R.T."/>
            <person name="Ravel J."/>
            <person name="Paulsen I.T."/>
            <person name="Kolonay J.F."/>
            <person name="Brinkac L.M."/>
            <person name="Beanan M.J."/>
            <person name="Dodson R.J."/>
            <person name="Daugherty S.C."/>
            <person name="Madupu R."/>
            <person name="Angiuoli S.V."/>
            <person name="Durkin A.S."/>
            <person name="Haft D.H."/>
            <person name="Vamathevan J.J."/>
            <person name="Khouri H."/>
            <person name="Utterback T.R."/>
            <person name="Lee C."/>
            <person name="Dimitrov G."/>
            <person name="Jiang L."/>
            <person name="Qin H."/>
            <person name="Weidman J."/>
            <person name="Tran K."/>
            <person name="Kang K.H."/>
            <person name="Hance I.R."/>
            <person name="Nelson K.E."/>
            <person name="Fraser C.M."/>
        </authorList>
    </citation>
    <scope>NUCLEOTIDE SEQUENCE [LARGE SCALE GENOMIC DNA]</scope>
    <source>
        <strain>ATCC 35984 / DSM 28319 / BCRC 17069 / CCUG 31568 / BM 3577 / RP62A</strain>
    </source>
</reference>
<organism>
    <name type="scientific">Staphylococcus epidermidis (strain ATCC 35984 / DSM 28319 / BCRC 17069 / CCUG 31568 / BM 3577 / RP62A)</name>
    <dbReference type="NCBI Taxonomy" id="176279"/>
    <lineage>
        <taxon>Bacteria</taxon>
        <taxon>Bacillati</taxon>
        <taxon>Bacillota</taxon>
        <taxon>Bacilli</taxon>
        <taxon>Bacillales</taxon>
        <taxon>Staphylococcaceae</taxon>
        <taxon>Staphylococcus</taxon>
    </lineage>
</organism>
<name>URE3_STAEQ</name>
<comment type="catalytic activity">
    <reaction evidence="1">
        <text>urea + 2 H2O + H(+) = hydrogencarbonate + 2 NH4(+)</text>
        <dbReference type="Rhea" id="RHEA:20557"/>
        <dbReference type="ChEBI" id="CHEBI:15377"/>
        <dbReference type="ChEBI" id="CHEBI:15378"/>
        <dbReference type="ChEBI" id="CHEBI:16199"/>
        <dbReference type="ChEBI" id="CHEBI:17544"/>
        <dbReference type="ChEBI" id="CHEBI:28938"/>
        <dbReference type="EC" id="3.5.1.5"/>
    </reaction>
</comment>
<comment type="pathway">
    <text evidence="1">Nitrogen metabolism; urea degradation; CO(2) and NH(3) from urea (urease route): step 1/1.</text>
</comment>
<comment type="subunit">
    <text evidence="1">Heterotrimer of UreA (gamma), UreB (beta) and UreC (alpha) subunits. Three heterotrimers associate to form the active enzyme.</text>
</comment>
<comment type="subcellular location">
    <subcellularLocation>
        <location evidence="1">Cytoplasm</location>
    </subcellularLocation>
</comment>
<comment type="similarity">
    <text evidence="1">Belongs to the urease gamma subunit family.</text>
</comment>
<keyword id="KW-0963">Cytoplasm</keyword>
<keyword id="KW-0378">Hydrolase</keyword>
<keyword id="KW-1185">Reference proteome</keyword>
<evidence type="ECO:0000255" key="1">
    <source>
        <dbReference type="HAMAP-Rule" id="MF_00739"/>
    </source>
</evidence>
<dbReference type="EC" id="3.5.1.5" evidence="1"/>
<dbReference type="EMBL" id="CP000029">
    <property type="protein sequence ID" value="AAW55241.1"/>
    <property type="molecule type" value="Genomic_DNA"/>
</dbReference>
<dbReference type="RefSeq" id="WP_001832402.1">
    <property type="nucleotide sequence ID" value="NC_002976.3"/>
</dbReference>
<dbReference type="SMR" id="Q5HLW3"/>
<dbReference type="STRING" id="176279.SERP1869"/>
<dbReference type="KEGG" id="ser:SERP1869"/>
<dbReference type="eggNOG" id="COG0831">
    <property type="taxonomic scope" value="Bacteria"/>
</dbReference>
<dbReference type="HOGENOM" id="CLU_145825_1_0_9"/>
<dbReference type="UniPathway" id="UPA00258">
    <property type="reaction ID" value="UER00370"/>
</dbReference>
<dbReference type="Proteomes" id="UP000000531">
    <property type="component" value="Chromosome"/>
</dbReference>
<dbReference type="GO" id="GO:0005737">
    <property type="term" value="C:cytoplasm"/>
    <property type="evidence" value="ECO:0007669"/>
    <property type="project" value="UniProtKB-SubCell"/>
</dbReference>
<dbReference type="GO" id="GO:0016151">
    <property type="term" value="F:nickel cation binding"/>
    <property type="evidence" value="ECO:0007669"/>
    <property type="project" value="InterPro"/>
</dbReference>
<dbReference type="GO" id="GO:0009039">
    <property type="term" value="F:urease activity"/>
    <property type="evidence" value="ECO:0007669"/>
    <property type="project" value="UniProtKB-UniRule"/>
</dbReference>
<dbReference type="GO" id="GO:0043419">
    <property type="term" value="P:urea catabolic process"/>
    <property type="evidence" value="ECO:0007669"/>
    <property type="project" value="UniProtKB-UniRule"/>
</dbReference>
<dbReference type="CDD" id="cd00390">
    <property type="entry name" value="Urease_gamma"/>
    <property type="match status" value="1"/>
</dbReference>
<dbReference type="Gene3D" id="3.30.280.10">
    <property type="entry name" value="Urease, gamma-like subunit"/>
    <property type="match status" value="1"/>
</dbReference>
<dbReference type="HAMAP" id="MF_00739">
    <property type="entry name" value="Urease_gamma"/>
    <property type="match status" value="1"/>
</dbReference>
<dbReference type="InterPro" id="IPR012010">
    <property type="entry name" value="Urease_gamma"/>
</dbReference>
<dbReference type="InterPro" id="IPR002026">
    <property type="entry name" value="Urease_gamma/gamma-beta_su"/>
</dbReference>
<dbReference type="InterPro" id="IPR036463">
    <property type="entry name" value="Urease_gamma_sf"/>
</dbReference>
<dbReference type="InterPro" id="IPR050069">
    <property type="entry name" value="Urease_subunit"/>
</dbReference>
<dbReference type="NCBIfam" id="NF009712">
    <property type="entry name" value="PRK13241.1"/>
    <property type="match status" value="1"/>
</dbReference>
<dbReference type="NCBIfam" id="TIGR00193">
    <property type="entry name" value="urease_gam"/>
    <property type="match status" value="1"/>
</dbReference>
<dbReference type="PANTHER" id="PTHR33569">
    <property type="entry name" value="UREASE"/>
    <property type="match status" value="1"/>
</dbReference>
<dbReference type="PANTHER" id="PTHR33569:SF1">
    <property type="entry name" value="UREASE"/>
    <property type="match status" value="1"/>
</dbReference>
<dbReference type="Pfam" id="PF00547">
    <property type="entry name" value="Urease_gamma"/>
    <property type="match status" value="1"/>
</dbReference>
<dbReference type="PIRSF" id="PIRSF001223">
    <property type="entry name" value="Urease_gamma"/>
    <property type="match status" value="1"/>
</dbReference>
<dbReference type="SUPFAM" id="SSF54111">
    <property type="entry name" value="Urease, gamma-subunit"/>
    <property type="match status" value="1"/>
</dbReference>
<gene>
    <name evidence="1" type="primary">ureA</name>
    <name type="ordered locus">SERP1869</name>
</gene>